<geneLocation type="plasmid">
    <name>pWb1</name>
    <name>pWig1</name>
</geneLocation>
<reference key="1">
    <citation type="journal article" date="2002" name="Nat. Genet.">
        <title>Genome sequence of the endocellular obligate symbiont of tsetse flies, Wigglesworthia glossinidia.</title>
        <authorList>
            <person name="Akman L."/>
            <person name="Yamashita A."/>
            <person name="Watanabe H."/>
            <person name="Oshima K."/>
            <person name="Shiba T."/>
            <person name="Hattori M."/>
            <person name="Aksoy S."/>
        </authorList>
    </citation>
    <scope>NUCLEOTIDE SEQUENCE [LARGE SCALE GENOMIC DNA]</scope>
</reference>
<comment type="function">
    <text evidence="1">Responsible for preventing unproductive conjugation between bacteria carrying like plasmids.</text>
</comment>
<comment type="subcellular location">
    <subcellularLocation>
        <location evidence="2">Cell membrane</location>
        <topology evidence="2">Lipid-anchor</topology>
    </subcellularLocation>
</comment>
<comment type="similarity">
    <text evidence="3">Belongs to the TraT lipoprotein family.</text>
</comment>
<keyword id="KW-1003">Cell membrane</keyword>
<keyword id="KW-0184">Conjugation</keyword>
<keyword id="KW-0449">Lipoprotein</keyword>
<keyword id="KW-0472">Membrane</keyword>
<keyword id="KW-0564">Palmitate</keyword>
<keyword id="KW-0614">Plasmid</keyword>
<keyword id="KW-1185">Reference proteome</keyword>
<keyword id="KW-0732">Signal</keyword>
<proteinExistence type="inferred from homology"/>
<protein>
    <recommendedName>
        <fullName>TraT complement resistance protein</fullName>
    </recommendedName>
</protein>
<feature type="signal peptide" evidence="2">
    <location>
        <begin position="1"/>
        <end position="24"/>
    </location>
</feature>
<feature type="chain" id="PRO_0000420406" description="TraT complement resistance protein">
    <location>
        <begin position="25"/>
        <end position="239"/>
    </location>
</feature>
<feature type="lipid moiety-binding region" description="N-palmitoyl cysteine" evidence="2">
    <location>
        <position position="25"/>
    </location>
</feature>
<feature type="lipid moiety-binding region" description="S-diacylglycerol cysteine" evidence="2">
    <location>
        <position position="25"/>
    </location>
</feature>
<evidence type="ECO:0000250" key="1"/>
<evidence type="ECO:0000255" key="2">
    <source>
        <dbReference type="PROSITE-ProRule" id="PRU00303"/>
    </source>
</evidence>
<evidence type="ECO:0000305" key="3"/>
<name>TRAT_WIGBR</name>
<gene>
    <name type="primary">traT</name>
    <name type="synonym">WGpWb0003</name>
    <name type="ordered locus">WIGBRp0030</name>
</gene>
<accession>P0DKR9</accession>
<organism>
    <name type="scientific">Wigglesworthia glossinidia brevipalpis</name>
    <dbReference type="NCBI Taxonomy" id="36870"/>
    <lineage>
        <taxon>Bacteria</taxon>
        <taxon>Pseudomonadati</taxon>
        <taxon>Pseudomonadota</taxon>
        <taxon>Gammaproteobacteria</taxon>
        <taxon>Enterobacterales</taxon>
        <taxon>Erwiniaceae</taxon>
        <taxon>Wigglesworthia</taxon>
    </lineage>
</organism>
<sequence>MKFFIELNKFRLIIVFIVCTSLIGCETINTFVKKRNLEVNTYMNKTIYLNPSEDKTVYIQVKNTSNREINGIKTKISSILKSKGYLITYYPEEANYWIQANILRIEQIKLENKDNLLHHCLEQYLDDIHHTPGLCNKENEEENNFIEKISKSFFENNNFIVVTDLQISQRTNILCSKFDRFHLNSKEKIKNVINPKSKEGKRNFYKTRIYSYANKVNLEFYEAKKEIENQISHSISEVF</sequence>
<dbReference type="EMBL" id="AB063523">
    <property type="status" value="NOT_ANNOTATED_CDS"/>
    <property type="molecule type" value="Genomic_DNA"/>
</dbReference>
<dbReference type="SMR" id="P0DKR9"/>
<dbReference type="OrthoDB" id="9791439at2"/>
<dbReference type="Proteomes" id="UP000000562">
    <property type="component" value="Plasmid pWb1"/>
</dbReference>
<dbReference type="GO" id="GO:0019867">
    <property type="term" value="C:outer membrane"/>
    <property type="evidence" value="ECO:0007669"/>
    <property type="project" value="InterPro"/>
</dbReference>
<dbReference type="GO" id="GO:0005886">
    <property type="term" value="C:plasma membrane"/>
    <property type="evidence" value="ECO:0007669"/>
    <property type="project" value="UniProtKB-SubCell"/>
</dbReference>
<dbReference type="InterPro" id="IPR008874">
    <property type="entry name" value="TraT_complement-R"/>
</dbReference>
<dbReference type="Pfam" id="PF05818">
    <property type="entry name" value="TraT"/>
    <property type="match status" value="1"/>
</dbReference>
<dbReference type="PIRSF" id="PIRSF002859">
    <property type="entry name" value="Lipo_traT"/>
    <property type="match status" value="1"/>
</dbReference>
<dbReference type="PROSITE" id="PS51257">
    <property type="entry name" value="PROKAR_LIPOPROTEIN"/>
    <property type="match status" value="1"/>
</dbReference>